<keyword id="KW-0067">ATP-binding</keyword>
<keyword id="KW-0963">Cytoplasm</keyword>
<keyword id="KW-0227">DNA damage</keyword>
<keyword id="KW-0233">DNA recombination</keyword>
<keyword id="KW-0234">DNA repair</keyword>
<keyword id="KW-0238">DNA-binding</keyword>
<keyword id="KW-0378">Hydrolase</keyword>
<keyword id="KW-0547">Nucleotide-binding</keyword>
<comment type="function">
    <text evidence="1">The RuvA-RuvB-RuvC complex processes Holliday junction (HJ) DNA during genetic recombination and DNA repair, while the RuvA-RuvB complex plays an important role in the rescue of blocked DNA replication forks via replication fork reversal (RFR). RuvA specifically binds to HJ cruciform DNA, conferring on it an open structure. The RuvB hexamer acts as an ATP-dependent pump, pulling dsDNA into and through the RuvAB complex. RuvB forms 2 homohexamers on either side of HJ DNA bound by 1 or 2 RuvA tetramers; 4 subunits per hexamer contact DNA at a time. Coordinated motions by a converter formed by DNA-disengaged RuvB subunits stimulates ATP hydrolysis and nucleotide exchange. Immobilization of the converter enables RuvB to convert the ATP-contained energy into a lever motion, pulling 2 nucleotides of DNA out of the RuvA tetramer per ATP hydrolyzed, thus driving DNA branch migration. The RuvB motors rotate together with the DNA substrate, which together with the progressing nucleotide cycle form the mechanistic basis for DNA recombination by continuous HJ branch migration. Branch migration allows RuvC to scan DNA until it finds its consensus sequence, where it cleaves and resolves cruciform DNA.</text>
</comment>
<comment type="catalytic activity">
    <reaction evidence="1">
        <text>ATP + H2O = ADP + phosphate + H(+)</text>
        <dbReference type="Rhea" id="RHEA:13065"/>
        <dbReference type="ChEBI" id="CHEBI:15377"/>
        <dbReference type="ChEBI" id="CHEBI:15378"/>
        <dbReference type="ChEBI" id="CHEBI:30616"/>
        <dbReference type="ChEBI" id="CHEBI:43474"/>
        <dbReference type="ChEBI" id="CHEBI:456216"/>
    </reaction>
</comment>
<comment type="subunit">
    <text evidence="1">Homohexamer. Forms an RuvA(8)-RuvB(12)-Holliday junction (HJ) complex. HJ DNA is sandwiched between 2 RuvA tetramers; dsDNA enters through RuvA and exits via RuvB. An RuvB hexamer assembles on each DNA strand where it exits the tetramer. Each RuvB hexamer is contacted by two RuvA subunits (via domain III) on 2 adjacent RuvB subunits; this complex drives branch migration. In the full resolvosome a probable DNA-RuvA(4)-RuvB(12)-RuvC(2) complex forms which resolves the HJ.</text>
</comment>
<comment type="subcellular location">
    <subcellularLocation>
        <location evidence="1">Cytoplasm</location>
    </subcellularLocation>
</comment>
<comment type="domain">
    <text evidence="1">Has 3 domains, the large (RuvB-L) and small ATPase (RuvB-S) domains and the C-terminal head (RuvB-H) domain. The head domain binds DNA, while the ATPase domains jointly bind ATP, ADP or are empty depending on the state of the subunit in the translocation cycle. During a single DNA translocation step the structure of each domain remains the same, but their relative positions change.</text>
</comment>
<comment type="similarity">
    <text evidence="1">Belongs to the RuvB family.</text>
</comment>
<proteinExistence type="inferred from homology"/>
<evidence type="ECO:0000255" key="1">
    <source>
        <dbReference type="HAMAP-Rule" id="MF_00016"/>
    </source>
</evidence>
<evidence type="ECO:0000256" key="2">
    <source>
        <dbReference type="SAM" id="MobiDB-lite"/>
    </source>
</evidence>
<accession>Q3MEF4</accession>
<gene>
    <name evidence="1" type="primary">ruvB</name>
    <name type="ordered locus">Ava_1008</name>
</gene>
<sequence length="366" mass="40556">MAIISSKKQPPEPNGQPNKRPESAPAAPKEKVLQPEAAIDEQGKQEESIRPQKFADYIGQKDLKDVLDIAIKAAKSRGEVLDHLLLYGPPGLGKTTMAMILASEMGVNYKITSAPALERPRDIVGLLVNLKPGDILFIDEIHRLSRMTEEILYPAMEDYRLDITVGKGSSARIRSIPLSKFTLVGATTRVGALTSPLRDRFGLIQKLRFYEVDELSQIVLRSAQLLQTQVTDDGATEIARRSRGTPRIANRLLKRVRDYAQVKSCTEVSQNIAAEALQLFQVDPCGLDWTDRRMLSVIIEQFNGGPVGLETIAAATGEDTQTIEEVYEPYLMQIGYLSRTPRGRTATKAAYKHMGFTPPNEQLSLL</sequence>
<organism>
    <name type="scientific">Trichormus variabilis (strain ATCC 29413 / PCC 7937)</name>
    <name type="common">Anabaena variabilis</name>
    <dbReference type="NCBI Taxonomy" id="240292"/>
    <lineage>
        <taxon>Bacteria</taxon>
        <taxon>Bacillati</taxon>
        <taxon>Cyanobacteriota</taxon>
        <taxon>Cyanophyceae</taxon>
        <taxon>Nostocales</taxon>
        <taxon>Nostocaceae</taxon>
        <taxon>Trichormus</taxon>
    </lineage>
</organism>
<feature type="chain" id="PRO_0000235345" description="Holliday junction branch migration complex subunit RuvB">
    <location>
        <begin position="1"/>
        <end position="366"/>
    </location>
</feature>
<feature type="region of interest" description="Disordered" evidence="2">
    <location>
        <begin position="1"/>
        <end position="49"/>
    </location>
</feature>
<feature type="region of interest" description="Large ATPase domain (RuvB-L)" evidence="1">
    <location>
        <begin position="13"/>
        <end position="210"/>
    </location>
</feature>
<feature type="region of interest" description="Small ATPAse domain (RuvB-S)" evidence="1">
    <location>
        <begin position="211"/>
        <end position="281"/>
    </location>
</feature>
<feature type="region of interest" description="Head domain (RuvB-H)" evidence="1">
    <location>
        <begin position="284"/>
        <end position="366"/>
    </location>
</feature>
<feature type="binding site" evidence="1">
    <location>
        <position position="49"/>
    </location>
    <ligand>
        <name>ATP</name>
        <dbReference type="ChEBI" id="CHEBI:30616"/>
    </ligand>
</feature>
<feature type="binding site" evidence="1">
    <location>
        <position position="50"/>
    </location>
    <ligand>
        <name>ATP</name>
        <dbReference type="ChEBI" id="CHEBI:30616"/>
    </ligand>
</feature>
<feature type="binding site" evidence="1">
    <location>
        <position position="91"/>
    </location>
    <ligand>
        <name>ATP</name>
        <dbReference type="ChEBI" id="CHEBI:30616"/>
    </ligand>
</feature>
<feature type="binding site" evidence="1">
    <location>
        <position position="94"/>
    </location>
    <ligand>
        <name>ATP</name>
        <dbReference type="ChEBI" id="CHEBI:30616"/>
    </ligand>
</feature>
<feature type="binding site" evidence="1">
    <location>
        <position position="95"/>
    </location>
    <ligand>
        <name>ATP</name>
        <dbReference type="ChEBI" id="CHEBI:30616"/>
    </ligand>
</feature>
<feature type="binding site" evidence="1">
    <location>
        <position position="95"/>
    </location>
    <ligand>
        <name>Mg(2+)</name>
        <dbReference type="ChEBI" id="CHEBI:18420"/>
    </ligand>
</feature>
<feature type="binding site" evidence="1">
    <location>
        <position position="96"/>
    </location>
    <ligand>
        <name>ATP</name>
        <dbReference type="ChEBI" id="CHEBI:30616"/>
    </ligand>
</feature>
<feature type="binding site" evidence="1">
    <location>
        <begin position="157"/>
        <end position="159"/>
    </location>
    <ligand>
        <name>ATP</name>
        <dbReference type="ChEBI" id="CHEBI:30616"/>
    </ligand>
</feature>
<feature type="binding site" evidence="1">
    <location>
        <position position="200"/>
    </location>
    <ligand>
        <name>ATP</name>
        <dbReference type="ChEBI" id="CHEBI:30616"/>
    </ligand>
</feature>
<feature type="binding site" evidence="1">
    <location>
        <position position="210"/>
    </location>
    <ligand>
        <name>ATP</name>
        <dbReference type="ChEBI" id="CHEBI:30616"/>
    </ligand>
</feature>
<feature type="binding site" evidence="1">
    <location>
        <position position="247"/>
    </location>
    <ligand>
        <name>ATP</name>
        <dbReference type="ChEBI" id="CHEBI:30616"/>
    </ligand>
</feature>
<feature type="binding site" evidence="1">
    <location>
        <position position="339"/>
    </location>
    <ligand>
        <name>DNA</name>
        <dbReference type="ChEBI" id="CHEBI:16991"/>
    </ligand>
</feature>
<feature type="binding site" evidence="1">
    <location>
        <position position="344"/>
    </location>
    <ligand>
        <name>DNA</name>
        <dbReference type="ChEBI" id="CHEBI:16991"/>
    </ligand>
</feature>
<name>RUVB_TRIV2</name>
<dbReference type="EC" id="3.6.4.-" evidence="1"/>
<dbReference type="EMBL" id="CP000117">
    <property type="protein sequence ID" value="ABA20632.1"/>
    <property type="molecule type" value="Genomic_DNA"/>
</dbReference>
<dbReference type="SMR" id="Q3MEF4"/>
<dbReference type="STRING" id="240292.Ava_1008"/>
<dbReference type="KEGG" id="ava:Ava_1008"/>
<dbReference type="eggNOG" id="COG2255">
    <property type="taxonomic scope" value="Bacteria"/>
</dbReference>
<dbReference type="HOGENOM" id="CLU_055599_1_0_3"/>
<dbReference type="Proteomes" id="UP000002533">
    <property type="component" value="Chromosome"/>
</dbReference>
<dbReference type="GO" id="GO:0005737">
    <property type="term" value="C:cytoplasm"/>
    <property type="evidence" value="ECO:0007669"/>
    <property type="project" value="UniProtKB-SubCell"/>
</dbReference>
<dbReference type="GO" id="GO:0048476">
    <property type="term" value="C:Holliday junction resolvase complex"/>
    <property type="evidence" value="ECO:0007669"/>
    <property type="project" value="UniProtKB-UniRule"/>
</dbReference>
<dbReference type="GO" id="GO:0005524">
    <property type="term" value="F:ATP binding"/>
    <property type="evidence" value="ECO:0007669"/>
    <property type="project" value="UniProtKB-UniRule"/>
</dbReference>
<dbReference type="GO" id="GO:0016887">
    <property type="term" value="F:ATP hydrolysis activity"/>
    <property type="evidence" value="ECO:0007669"/>
    <property type="project" value="InterPro"/>
</dbReference>
<dbReference type="GO" id="GO:0000400">
    <property type="term" value="F:four-way junction DNA binding"/>
    <property type="evidence" value="ECO:0007669"/>
    <property type="project" value="UniProtKB-UniRule"/>
</dbReference>
<dbReference type="GO" id="GO:0009378">
    <property type="term" value="F:four-way junction helicase activity"/>
    <property type="evidence" value="ECO:0007669"/>
    <property type="project" value="InterPro"/>
</dbReference>
<dbReference type="GO" id="GO:0006310">
    <property type="term" value="P:DNA recombination"/>
    <property type="evidence" value="ECO:0007669"/>
    <property type="project" value="UniProtKB-UniRule"/>
</dbReference>
<dbReference type="GO" id="GO:0006281">
    <property type="term" value="P:DNA repair"/>
    <property type="evidence" value="ECO:0007669"/>
    <property type="project" value="UniProtKB-UniRule"/>
</dbReference>
<dbReference type="CDD" id="cd00009">
    <property type="entry name" value="AAA"/>
    <property type="match status" value="1"/>
</dbReference>
<dbReference type="Gene3D" id="1.10.8.60">
    <property type="match status" value="1"/>
</dbReference>
<dbReference type="Gene3D" id="3.40.50.300">
    <property type="entry name" value="P-loop containing nucleotide triphosphate hydrolases"/>
    <property type="match status" value="1"/>
</dbReference>
<dbReference type="Gene3D" id="1.10.10.10">
    <property type="entry name" value="Winged helix-like DNA-binding domain superfamily/Winged helix DNA-binding domain"/>
    <property type="match status" value="1"/>
</dbReference>
<dbReference type="HAMAP" id="MF_00016">
    <property type="entry name" value="DNA_HJ_migration_RuvB"/>
    <property type="match status" value="1"/>
</dbReference>
<dbReference type="InterPro" id="IPR003593">
    <property type="entry name" value="AAA+_ATPase"/>
</dbReference>
<dbReference type="InterPro" id="IPR041445">
    <property type="entry name" value="AAA_lid_4"/>
</dbReference>
<dbReference type="InterPro" id="IPR004605">
    <property type="entry name" value="DNA_helicase_Holl-junc_RuvB"/>
</dbReference>
<dbReference type="InterPro" id="IPR027417">
    <property type="entry name" value="P-loop_NTPase"/>
</dbReference>
<dbReference type="InterPro" id="IPR008824">
    <property type="entry name" value="RuvB-like_N"/>
</dbReference>
<dbReference type="InterPro" id="IPR008823">
    <property type="entry name" value="RuvB_C"/>
</dbReference>
<dbReference type="InterPro" id="IPR036388">
    <property type="entry name" value="WH-like_DNA-bd_sf"/>
</dbReference>
<dbReference type="InterPro" id="IPR036390">
    <property type="entry name" value="WH_DNA-bd_sf"/>
</dbReference>
<dbReference type="NCBIfam" id="NF000868">
    <property type="entry name" value="PRK00080.1"/>
    <property type="match status" value="1"/>
</dbReference>
<dbReference type="NCBIfam" id="TIGR00635">
    <property type="entry name" value="ruvB"/>
    <property type="match status" value="1"/>
</dbReference>
<dbReference type="PANTHER" id="PTHR42848">
    <property type="match status" value="1"/>
</dbReference>
<dbReference type="PANTHER" id="PTHR42848:SF1">
    <property type="entry name" value="HOLLIDAY JUNCTION BRANCH MIGRATION COMPLEX SUBUNIT RUVB"/>
    <property type="match status" value="1"/>
</dbReference>
<dbReference type="Pfam" id="PF17864">
    <property type="entry name" value="AAA_lid_4"/>
    <property type="match status" value="1"/>
</dbReference>
<dbReference type="Pfam" id="PF05491">
    <property type="entry name" value="RuvB_C"/>
    <property type="match status" value="1"/>
</dbReference>
<dbReference type="Pfam" id="PF05496">
    <property type="entry name" value="RuvB_N"/>
    <property type="match status" value="1"/>
</dbReference>
<dbReference type="SMART" id="SM00382">
    <property type="entry name" value="AAA"/>
    <property type="match status" value="1"/>
</dbReference>
<dbReference type="SUPFAM" id="SSF52540">
    <property type="entry name" value="P-loop containing nucleoside triphosphate hydrolases"/>
    <property type="match status" value="1"/>
</dbReference>
<dbReference type="SUPFAM" id="SSF46785">
    <property type="entry name" value="Winged helix' DNA-binding domain"/>
    <property type="match status" value="1"/>
</dbReference>
<reference key="1">
    <citation type="journal article" date="2014" name="Stand. Genomic Sci.">
        <title>Complete genome sequence of Anabaena variabilis ATCC 29413.</title>
        <authorList>
            <person name="Thiel T."/>
            <person name="Pratte B.S."/>
            <person name="Zhong J."/>
            <person name="Goodwin L."/>
            <person name="Copeland A."/>
            <person name="Lucas S."/>
            <person name="Han C."/>
            <person name="Pitluck S."/>
            <person name="Land M.L."/>
            <person name="Kyrpides N.C."/>
            <person name="Woyke T."/>
        </authorList>
    </citation>
    <scope>NUCLEOTIDE SEQUENCE [LARGE SCALE GENOMIC DNA]</scope>
    <source>
        <strain>ATCC 29413 / PCC 7937</strain>
    </source>
</reference>
<protein>
    <recommendedName>
        <fullName evidence="1">Holliday junction branch migration complex subunit RuvB</fullName>
        <ecNumber evidence="1">3.6.4.-</ecNumber>
    </recommendedName>
</protein>